<comment type="similarity">
    <text evidence="1">Belongs to the UPF0502 family.</text>
</comment>
<name>Y2102_VEREI</name>
<evidence type="ECO:0000255" key="1">
    <source>
        <dbReference type="HAMAP-Rule" id="MF_01584"/>
    </source>
</evidence>
<feature type="chain" id="PRO_0000309438" description="UPF0502 protein Veis_2102">
    <location>
        <begin position="1"/>
        <end position="240"/>
    </location>
</feature>
<proteinExistence type="inferred from homology"/>
<protein>
    <recommendedName>
        <fullName evidence="1">UPF0502 protein Veis_2102</fullName>
    </recommendedName>
</protein>
<reference key="1">
    <citation type="submission" date="2006-12" db="EMBL/GenBank/DDBJ databases">
        <title>Complete sequence of chromosome 1 of Verminephrobacter eiseniae EF01-2.</title>
        <authorList>
            <person name="Copeland A."/>
            <person name="Lucas S."/>
            <person name="Lapidus A."/>
            <person name="Barry K."/>
            <person name="Detter J.C."/>
            <person name="Glavina del Rio T."/>
            <person name="Dalin E."/>
            <person name="Tice H."/>
            <person name="Pitluck S."/>
            <person name="Chertkov O."/>
            <person name="Brettin T."/>
            <person name="Bruce D."/>
            <person name="Han C."/>
            <person name="Tapia R."/>
            <person name="Gilna P."/>
            <person name="Schmutz J."/>
            <person name="Larimer F."/>
            <person name="Land M."/>
            <person name="Hauser L."/>
            <person name="Kyrpides N."/>
            <person name="Kim E."/>
            <person name="Stahl D."/>
            <person name="Richardson P."/>
        </authorList>
    </citation>
    <scope>NUCLEOTIDE SEQUENCE [LARGE SCALE GENOMIC DNA]</scope>
    <source>
        <strain>EF01-2</strain>
    </source>
</reference>
<organism>
    <name type="scientific">Verminephrobacter eiseniae (strain EF01-2)</name>
    <dbReference type="NCBI Taxonomy" id="391735"/>
    <lineage>
        <taxon>Bacteria</taxon>
        <taxon>Pseudomonadati</taxon>
        <taxon>Pseudomonadota</taxon>
        <taxon>Betaproteobacteria</taxon>
        <taxon>Burkholderiales</taxon>
        <taxon>Comamonadaceae</taxon>
        <taxon>Verminephrobacter</taxon>
    </lineage>
</organism>
<keyword id="KW-1185">Reference proteome</keyword>
<sequence>MPFDPAASPLSPSQARVLATLMEKARTVPDSYPMSLNGLLTGCNQKTSRDPVMALSEAQVQEALAALERLALVFENSGYRSPRWEHNFQRGAGVPEQSAVLLGLLMLRGPQTAAELRTNAERWYRFADISSVEAFLDELQQRSADKGGPLAVPLPRSPGTREQRWAHLLCGPVDAGRSNAGVEPVPAGVETLQERIGTLESELASLRATVQWLCQELGITPAPASMPQPGLPAGNGSPGS</sequence>
<accession>A1WJP5</accession>
<dbReference type="EMBL" id="CP000542">
    <property type="protein sequence ID" value="ABM57852.1"/>
    <property type="molecule type" value="Genomic_DNA"/>
</dbReference>
<dbReference type="RefSeq" id="WP_011809858.1">
    <property type="nucleotide sequence ID" value="NC_008786.1"/>
</dbReference>
<dbReference type="SMR" id="A1WJP5"/>
<dbReference type="GeneID" id="76460676"/>
<dbReference type="KEGG" id="vei:Veis_2102"/>
<dbReference type="eggNOG" id="COG3132">
    <property type="taxonomic scope" value="Bacteria"/>
</dbReference>
<dbReference type="HOGENOM" id="CLU_057831_0_0_4"/>
<dbReference type="OrthoDB" id="9784785at2"/>
<dbReference type="Proteomes" id="UP000000374">
    <property type="component" value="Chromosome"/>
</dbReference>
<dbReference type="Gene3D" id="1.10.10.10">
    <property type="entry name" value="Winged helix-like DNA-binding domain superfamily/Winged helix DNA-binding domain"/>
    <property type="match status" value="2"/>
</dbReference>
<dbReference type="HAMAP" id="MF_01584">
    <property type="entry name" value="UPF0502"/>
    <property type="match status" value="1"/>
</dbReference>
<dbReference type="InterPro" id="IPR007432">
    <property type="entry name" value="DUF480"/>
</dbReference>
<dbReference type="InterPro" id="IPR036388">
    <property type="entry name" value="WH-like_DNA-bd_sf"/>
</dbReference>
<dbReference type="InterPro" id="IPR036390">
    <property type="entry name" value="WH_DNA-bd_sf"/>
</dbReference>
<dbReference type="PANTHER" id="PTHR38768">
    <property type="entry name" value="UPF0502 PROTEIN YCEH"/>
    <property type="match status" value="1"/>
</dbReference>
<dbReference type="PANTHER" id="PTHR38768:SF1">
    <property type="entry name" value="UPF0502 PROTEIN YCEH"/>
    <property type="match status" value="1"/>
</dbReference>
<dbReference type="Pfam" id="PF04337">
    <property type="entry name" value="DUF480"/>
    <property type="match status" value="1"/>
</dbReference>
<dbReference type="SUPFAM" id="SSF46785">
    <property type="entry name" value="Winged helix' DNA-binding domain"/>
    <property type="match status" value="2"/>
</dbReference>
<gene>
    <name type="ordered locus">Veis_2102</name>
</gene>